<feature type="chain" id="PRO_0000413589" description="F420-dependent glucose-6-phosphate dehydrogenase">
    <location>
        <begin position="1"/>
        <end position="334"/>
    </location>
</feature>
<feature type="active site" description="Proton donor" evidence="1">
    <location>
        <position position="39"/>
    </location>
</feature>
<feature type="active site" description="Proton acceptor" evidence="1">
    <location>
        <position position="108"/>
    </location>
</feature>
<feature type="binding site" evidence="1">
    <location>
        <position position="38"/>
    </location>
    <ligand>
        <name>coenzyme F420-(gamma-Glu)n</name>
        <dbReference type="ChEBI" id="CHEBI:133980"/>
    </ligand>
</feature>
<feature type="binding site" evidence="1">
    <location>
        <position position="75"/>
    </location>
    <ligand>
        <name>coenzyme F420-(gamma-Glu)n</name>
        <dbReference type="ChEBI" id="CHEBI:133980"/>
    </ligand>
</feature>
<feature type="binding site" evidence="1">
    <location>
        <begin position="106"/>
        <end position="107"/>
    </location>
    <ligand>
        <name>coenzyme F420-(gamma-Glu)n</name>
        <dbReference type="ChEBI" id="CHEBI:133980"/>
    </ligand>
</feature>
<feature type="binding site" evidence="1">
    <location>
        <position position="111"/>
    </location>
    <ligand>
        <name>coenzyme F420-(gamma-Glu)n</name>
        <dbReference type="ChEBI" id="CHEBI:133980"/>
    </ligand>
</feature>
<feature type="binding site" evidence="1">
    <location>
        <begin position="175"/>
        <end position="176"/>
    </location>
    <ligand>
        <name>coenzyme F420-(gamma-Glu)n</name>
        <dbReference type="ChEBI" id="CHEBI:133980"/>
    </ligand>
</feature>
<feature type="binding site" evidence="1">
    <location>
        <begin position="178"/>
        <end position="179"/>
    </location>
    <ligand>
        <name>coenzyme F420-(gamma-Glu)n</name>
        <dbReference type="ChEBI" id="CHEBI:133980"/>
    </ligand>
</feature>
<feature type="binding site" evidence="1">
    <location>
        <position position="193"/>
    </location>
    <ligand>
        <name>substrate</name>
    </ligand>
</feature>
<feature type="binding site" evidence="1">
    <location>
        <position position="196"/>
    </location>
    <ligand>
        <name>substrate</name>
    </ligand>
</feature>
<feature type="binding site" evidence="1">
    <location>
        <position position="257"/>
    </location>
    <ligand>
        <name>substrate</name>
    </ligand>
</feature>
<feature type="binding site" evidence="1">
    <location>
        <position position="281"/>
    </location>
    <ligand>
        <name>substrate</name>
    </ligand>
</feature>
<protein>
    <recommendedName>
        <fullName evidence="1">F420-dependent glucose-6-phosphate dehydrogenase</fullName>
        <shortName evidence="1">FGD</shortName>
        <shortName evidence="1">G6PD</shortName>
        <ecNumber evidence="1">1.1.98.2</ecNumber>
    </recommendedName>
</protein>
<proteinExistence type="inferred from homology"/>
<keyword id="KW-0119">Carbohydrate metabolism</keyword>
<keyword id="KW-0560">Oxidoreductase</keyword>
<keyword id="KW-1185">Reference proteome</keyword>
<sequence>MSIRIGYKASAEQFGPRDLVEYAVRAEELGLDSVTVSDHFLPWRHEGGHAPFALAWMAAVGERTNRVLIGTSVLTPTFRYNPAVIAQAFATMGLLYPGRIMLGVGTGEALNEIAVSGREWPEFKERFARLREAVDLIRDLWTKEGVSSDGPFYPTVDASIYDRPETPVKVYVAAGGPLVAKYAGRAGDGFIATSGKGMELYTEKLLPAVKEGAEKAGKTFEDVDRMLEVKVSYDRDPEAALENTRFWAPLSLTPEQKHSVDSATEMERLADELPIEQVAKRWIVASDPEQAVKQFRPYLEAGFNHFVVHGPGHDQERFLTQFTEDVVPLLRKLG</sequence>
<comment type="function">
    <text evidence="1">Catalyzes the coenzyme F420-dependent oxidation of glucose 6-phosphate (G6P) to 6-phosphogluconolactone.</text>
</comment>
<comment type="catalytic activity">
    <reaction evidence="1">
        <text>oxidized coenzyme F420-(gamma-L-Glu)(n) + D-glucose 6-phosphate + H(+) = 6-phospho-D-glucono-1,5-lactone + reduced coenzyme F420-(gamma-L-Glu)(n)</text>
        <dbReference type="Rhea" id="RHEA:27294"/>
        <dbReference type="Rhea" id="RHEA-COMP:12939"/>
        <dbReference type="Rhea" id="RHEA-COMP:14378"/>
        <dbReference type="ChEBI" id="CHEBI:15378"/>
        <dbReference type="ChEBI" id="CHEBI:57955"/>
        <dbReference type="ChEBI" id="CHEBI:61548"/>
        <dbReference type="ChEBI" id="CHEBI:133980"/>
        <dbReference type="ChEBI" id="CHEBI:139511"/>
        <dbReference type="EC" id="1.1.98.2"/>
    </reaction>
</comment>
<comment type="subunit">
    <text evidence="1">Homodimer.</text>
</comment>
<comment type="similarity">
    <text evidence="1">Belongs to the F420-dependent glucose-6-phosphate dehydrogenase family.</text>
</comment>
<reference key="1">
    <citation type="submission" date="2009-09" db="EMBL/GenBank/DDBJ databases">
        <title>The complete genome of Kribbella flavida DSM 17836.</title>
        <authorList>
            <consortium name="US DOE Joint Genome Institute (JGI-PGF)"/>
            <person name="Lucas S."/>
            <person name="Copeland A."/>
            <person name="Lapidus A."/>
            <person name="Glavina del Rio T."/>
            <person name="Dalin E."/>
            <person name="Tice H."/>
            <person name="Bruce D."/>
            <person name="Goodwin L."/>
            <person name="Pitluck S."/>
            <person name="Kyrpides N."/>
            <person name="Mavromatis K."/>
            <person name="Ivanova N."/>
            <person name="Saunders E."/>
            <person name="Brettin T."/>
            <person name="Detter J.C."/>
            <person name="Han C."/>
            <person name="Larimer F."/>
            <person name="Land M."/>
            <person name="Hauser L."/>
            <person name="Markowitz V."/>
            <person name="Cheng J.-F."/>
            <person name="Hugenholtz P."/>
            <person name="Woyke T."/>
            <person name="Wu D."/>
            <person name="Pukall R."/>
            <person name="Klenk H.-P."/>
            <person name="Eisen J.A."/>
        </authorList>
    </citation>
    <scope>NUCLEOTIDE SEQUENCE [LARGE SCALE GENOMIC DNA]</scope>
    <source>
        <strain>DSM 17836 / JCM 10339 / NBRC 14399</strain>
    </source>
</reference>
<dbReference type="EC" id="1.1.98.2" evidence="1"/>
<dbReference type="EMBL" id="CP001736">
    <property type="protein sequence ID" value="ADB29414.1"/>
    <property type="molecule type" value="Genomic_DNA"/>
</dbReference>
<dbReference type="RefSeq" id="WP_012917971.1">
    <property type="nucleotide sequence ID" value="NC_013729.1"/>
</dbReference>
<dbReference type="SMR" id="D2PT98"/>
<dbReference type="STRING" id="479435.Kfla_0290"/>
<dbReference type="KEGG" id="kfl:Kfla_0290"/>
<dbReference type="eggNOG" id="COG2141">
    <property type="taxonomic scope" value="Bacteria"/>
</dbReference>
<dbReference type="HOGENOM" id="CLU_027853_4_0_11"/>
<dbReference type="OrthoDB" id="180193at2"/>
<dbReference type="Proteomes" id="UP000007967">
    <property type="component" value="Chromosome"/>
</dbReference>
<dbReference type="GO" id="GO:0070967">
    <property type="term" value="F:coenzyme F420 binding"/>
    <property type="evidence" value="ECO:0007669"/>
    <property type="project" value="UniProtKB-UniRule"/>
</dbReference>
<dbReference type="GO" id="GO:0052749">
    <property type="term" value="F:glucose-6-phosphate dehydrogenase (coenzyme F420) activity"/>
    <property type="evidence" value="ECO:0007669"/>
    <property type="project" value="UniProtKB-EC"/>
</dbReference>
<dbReference type="GO" id="GO:0016705">
    <property type="term" value="F:oxidoreductase activity, acting on paired donors, with incorporation or reduction of molecular oxygen"/>
    <property type="evidence" value="ECO:0007669"/>
    <property type="project" value="InterPro"/>
</dbReference>
<dbReference type="GO" id="GO:0005975">
    <property type="term" value="P:carbohydrate metabolic process"/>
    <property type="evidence" value="ECO:0007669"/>
    <property type="project" value="UniProtKB-UniRule"/>
</dbReference>
<dbReference type="CDD" id="cd01097">
    <property type="entry name" value="Tetrahydromethanopterin_reductase"/>
    <property type="match status" value="1"/>
</dbReference>
<dbReference type="Gene3D" id="3.20.20.30">
    <property type="entry name" value="Luciferase-like domain"/>
    <property type="match status" value="1"/>
</dbReference>
<dbReference type="HAMAP" id="MF_02123">
    <property type="entry name" value="F420_G6P_DH"/>
    <property type="match status" value="1"/>
</dbReference>
<dbReference type="InterPro" id="IPR019944">
    <property type="entry name" value="F420-dep_G6P_DH"/>
</dbReference>
<dbReference type="InterPro" id="IPR050564">
    <property type="entry name" value="F420-G6PD/mer"/>
</dbReference>
<dbReference type="InterPro" id="IPR019945">
    <property type="entry name" value="F420_G6P_DH-rel"/>
</dbReference>
<dbReference type="InterPro" id="IPR011251">
    <property type="entry name" value="Luciferase-like_dom"/>
</dbReference>
<dbReference type="InterPro" id="IPR036661">
    <property type="entry name" value="Luciferase-like_sf"/>
</dbReference>
<dbReference type="NCBIfam" id="TIGR03554">
    <property type="entry name" value="F420_G6P_DH"/>
    <property type="match status" value="1"/>
</dbReference>
<dbReference type="NCBIfam" id="TIGR03557">
    <property type="entry name" value="F420_G6P_family"/>
    <property type="match status" value="1"/>
</dbReference>
<dbReference type="PANTHER" id="PTHR43244">
    <property type="match status" value="1"/>
</dbReference>
<dbReference type="PANTHER" id="PTHR43244:SF1">
    <property type="entry name" value="5,10-METHYLENETETRAHYDROMETHANOPTERIN REDUCTASE"/>
    <property type="match status" value="1"/>
</dbReference>
<dbReference type="Pfam" id="PF00296">
    <property type="entry name" value="Bac_luciferase"/>
    <property type="match status" value="1"/>
</dbReference>
<dbReference type="SUPFAM" id="SSF51679">
    <property type="entry name" value="Bacterial luciferase-like"/>
    <property type="match status" value="1"/>
</dbReference>
<evidence type="ECO:0000255" key="1">
    <source>
        <dbReference type="HAMAP-Rule" id="MF_02123"/>
    </source>
</evidence>
<organism>
    <name type="scientific">Kribbella flavida (strain DSM 17836 / JCM 10339 / NBRC 14399)</name>
    <dbReference type="NCBI Taxonomy" id="479435"/>
    <lineage>
        <taxon>Bacteria</taxon>
        <taxon>Bacillati</taxon>
        <taxon>Actinomycetota</taxon>
        <taxon>Actinomycetes</taxon>
        <taxon>Propionibacteriales</taxon>
        <taxon>Kribbellaceae</taxon>
        <taxon>Kribbella</taxon>
    </lineage>
</organism>
<name>FGD_KRIFD</name>
<gene>
    <name evidence="1" type="primary">fgd</name>
    <name type="ordered locus">Kfla_0290</name>
</gene>
<accession>D2PT98</accession>